<proteinExistence type="inferred from homology"/>
<organism>
    <name type="scientific">Ehrlichia canis (strain Jake)</name>
    <dbReference type="NCBI Taxonomy" id="269484"/>
    <lineage>
        <taxon>Bacteria</taxon>
        <taxon>Pseudomonadati</taxon>
        <taxon>Pseudomonadota</taxon>
        <taxon>Alphaproteobacteria</taxon>
        <taxon>Rickettsiales</taxon>
        <taxon>Anaplasmataceae</taxon>
        <taxon>Ehrlichia</taxon>
    </lineage>
</organism>
<comment type="function">
    <text evidence="1">Binds to 23S rRNA. Forms part of two intersubunit bridges in the 70S ribosome.</text>
</comment>
<comment type="subunit">
    <text evidence="1">Part of the 50S ribosomal subunit. Forms a cluster with proteins L3 and L19. In the 70S ribosome, L14 and L19 interact and together make contacts with the 16S rRNA in bridges B5 and B8.</text>
</comment>
<comment type="similarity">
    <text evidence="1">Belongs to the universal ribosomal protein uL14 family.</text>
</comment>
<name>RL14_EHRCJ</name>
<protein>
    <recommendedName>
        <fullName evidence="1">Large ribosomal subunit protein uL14</fullName>
    </recommendedName>
    <alternativeName>
        <fullName evidence="2">50S ribosomal protein L14</fullName>
    </alternativeName>
</protein>
<accession>Q3YRL9</accession>
<feature type="chain" id="PRO_0000355814" description="Large ribosomal subunit protein uL14">
    <location>
        <begin position="1"/>
        <end position="119"/>
    </location>
</feature>
<evidence type="ECO:0000255" key="1">
    <source>
        <dbReference type="HAMAP-Rule" id="MF_01367"/>
    </source>
</evidence>
<evidence type="ECO:0000305" key="2"/>
<sequence length="119" mass="12704">MIQKNTLLDVADNSGARKVLCIGLLNGKKSASVGDVIVVSTKVITPRGKVSKGKVYKAVVVRVKKAVRRLDGSIIRFSSNAVVLINDQGDPLGTRVFGPIKKLPFGLFSKVMSLAVEVL</sequence>
<gene>
    <name evidence="1" type="primary">rplN</name>
    <name type="ordered locus">Ecaj_0602</name>
</gene>
<dbReference type="EMBL" id="CP000107">
    <property type="protein sequence ID" value="AAZ68636.1"/>
    <property type="molecule type" value="Genomic_DNA"/>
</dbReference>
<dbReference type="RefSeq" id="WP_011304714.1">
    <property type="nucleotide sequence ID" value="NC_007354.1"/>
</dbReference>
<dbReference type="SMR" id="Q3YRL9"/>
<dbReference type="FunCoup" id="Q3YRL9">
    <property type="interactions" value="338"/>
</dbReference>
<dbReference type="STRING" id="269484.Ecaj_0602"/>
<dbReference type="KEGG" id="ecn:Ecaj_0602"/>
<dbReference type="eggNOG" id="COG0093">
    <property type="taxonomic scope" value="Bacteria"/>
</dbReference>
<dbReference type="HOGENOM" id="CLU_095071_2_2_5"/>
<dbReference type="InParanoid" id="Q3YRL9"/>
<dbReference type="Proteomes" id="UP000000435">
    <property type="component" value="Chromosome"/>
</dbReference>
<dbReference type="GO" id="GO:0022625">
    <property type="term" value="C:cytosolic large ribosomal subunit"/>
    <property type="evidence" value="ECO:0007669"/>
    <property type="project" value="TreeGrafter"/>
</dbReference>
<dbReference type="GO" id="GO:0070180">
    <property type="term" value="F:large ribosomal subunit rRNA binding"/>
    <property type="evidence" value="ECO:0007669"/>
    <property type="project" value="TreeGrafter"/>
</dbReference>
<dbReference type="GO" id="GO:0003735">
    <property type="term" value="F:structural constituent of ribosome"/>
    <property type="evidence" value="ECO:0007669"/>
    <property type="project" value="InterPro"/>
</dbReference>
<dbReference type="GO" id="GO:0006412">
    <property type="term" value="P:translation"/>
    <property type="evidence" value="ECO:0007669"/>
    <property type="project" value="UniProtKB-UniRule"/>
</dbReference>
<dbReference type="CDD" id="cd00337">
    <property type="entry name" value="Ribosomal_uL14"/>
    <property type="match status" value="1"/>
</dbReference>
<dbReference type="Gene3D" id="2.40.150.20">
    <property type="entry name" value="Ribosomal protein L14"/>
    <property type="match status" value="1"/>
</dbReference>
<dbReference type="HAMAP" id="MF_01367">
    <property type="entry name" value="Ribosomal_uL14"/>
    <property type="match status" value="1"/>
</dbReference>
<dbReference type="InterPro" id="IPR000218">
    <property type="entry name" value="Ribosomal_uL14"/>
</dbReference>
<dbReference type="InterPro" id="IPR005745">
    <property type="entry name" value="Ribosomal_uL14_bac-type"/>
</dbReference>
<dbReference type="InterPro" id="IPR019972">
    <property type="entry name" value="Ribosomal_uL14_CS"/>
</dbReference>
<dbReference type="InterPro" id="IPR036853">
    <property type="entry name" value="Ribosomal_uL14_sf"/>
</dbReference>
<dbReference type="NCBIfam" id="TIGR01067">
    <property type="entry name" value="rplN_bact"/>
    <property type="match status" value="1"/>
</dbReference>
<dbReference type="PANTHER" id="PTHR11761">
    <property type="entry name" value="50S/60S RIBOSOMAL PROTEIN L14/L23"/>
    <property type="match status" value="1"/>
</dbReference>
<dbReference type="PANTHER" id="PTHR11761:SF3">
    <property type="entry name" value="LARGE RIBOSOMAL SUBUNIT PROTEIN UL14M"/>
    <property type="match status" value="1"/>
</dbReference>
<dbReference type="Pfam" id="PF00238">
    <property type="entry name" value="Ribosomal_L14"/>
    <property type="match status" value="1"/>
</dbReference>
<dbReference type="SMART" id="SM01374">
    <property type="entry name" value="Ribosomal_L14"/>
    <property type="match status" value="1"/>
</dbReference>
<dbReference type="SUPFAM" id="SSF50193">
    <property type="entry name" value="Ribosomal protein L14"/>
    <property type="match status" value="1"/>
</dbReference>
<dbReference type="PROSITE" id="PS00049">
    <property type="entry name" value="RIBOSOMAL_L14"/>
    <property type="match status" value="1"/>
</dbReference>
<reference key="1">
    <citation type="journal article" date="2006" name="J. Bacteriol.">
        <title>The genome of the obligately intracellular bacterium Ehrlichia canis reveals themes of complex membrane structure and immune evasion strategies.</title>
        <authorList>
            <person name="Mavromatis K."/>
            <person name="Doyle C.K."/>
            <person name="Lykidis A."/>
            <person name="Ivanova N."/>
            <person name="Francino M.P."/>
            <person name="Chain P."/>
            <person name="Shin M."/>
            <person name="Malfatti S."/>
            <person name="Larimer F."/>
            <person name="Copeland A."/>
            <person name="Detter J.C."/>
            <person name="Land M."/>
            <person name="Richardson P.M."/>
            <person name="Yu X.J."/>
            <person name="Walker D.H."/>
            <person name="McBride J.W."/>
            <person name="Kyrpides N.C."/>
        </authorList>
    </citation>
    <scope>NUCLEOTIDE SEQUENCE [LARGE SCALE GENOMIC DNA]</scope>
    <source>
        <strain>Jake</strain>
    </source>
</reference>
<keyword id="KW-0687">Ribonucleoprotein</keyword>
<keyword id="KW-0689">Ribosomal protein</keyword>
<keyword id="KW-0694">RNA-binding</keyword>
<keyword id="KW-0699">rRNA-binding</keyword>